<reference key="1">
    <citation type="journal article" date="2011" name="J. Bacteriol.">
        <title>Comparative genomics of 28 Salmonella enterica isolates: evidence for CRISPR-mediated adaptive sublineage evolution.</title>
        <authorList>
            <person name="Fricke W.F."/>
            <person name="Mammel M.K."/>
            <person name="McDermott P.F."/>
            <person name="Tartera C."/>
            <person name="White D.G."/>
            <person name="Leclerc J.E."/>
            <person name="Ravel J."/>
            <person name="Cebula T.A."/>
        </authorList>
    </citation>
    <scope>NUCLEOTIDE SEQUENCE [LARGE SCALE GENOMIC DNA]</scope>
    <source>
        <strain>SL476</strain>
    </source>
</reference>
<dbReference type="EC" id="2.1.1.163" evidence="1"/>
<dbReference type="EC" id="2.1.1.201" evidence="1"/>
<dbReference type="EMBL" id="CP001120">
    <property type="protein sequence ID" value="ACF69402.1"/>
    <property type="molecule type" value="Genomic_DNA"/>
</dbReference>
<dbReference type="RefSeq" id="WP_000229009.1">
    <property type="nucleotide sequence ID" value="NC_011083.1"/>
</dbReference>
<dbReference type="SMR" id="B4TBR3"/>
<dbReference type="KEGG" id="seh:SeHA_C4297"/>
<dbReference type="HOGENOM" id="CLU_037990_0_0_6"/>
<dbReference type="UniPathway" id="UPA00079">
    <property type="reaction ID" value="UER00169"/>
</dbReference>
<dbReference type="UniPathway" id="UPA00232"/>
<dbReference type="Proteomes" id="UP000001866">
    <property type="component" value="Chromosome"/>
</dbReference>
<dbReference type="GO" id="GO:0008425">
    <property type="term" value="F:2-methoxy-6-polyprenyl-1,4-benzoquinol methyltransferase activity"/>
    <property type="evidence" value="ECO:0007669"/>
    <property type="project" value="UniProtKB-UniRule"/>
</dbReference>
<dbReference type="GO" id="GO:0043770">
    <property type="term" value="F:demethylmenaquinone methyltransferase activity"/>
    <property type="evidence" value="ECO:0007669"/>
    <property type="project" value="UniProtKB-UniRule"/>
</dbReference>
<dbReference type="GO" id="GO:0009060">
    <property type="term" value="P:aerobic respiration"/>
    <property type="evidence" value="ECO:0007669"/>
    <property type="project" value="UniProtKB-UniRule"/>
</dbReference>
<dbReference type="GO" id="GO:0009234">
    <property type="term" value="P:menaquinone biosynthetic process"/>
    <property type="evidence" value="ECO:0007669"/>
    <property type="project" value="UniProtKB-UniRule"/>
</dbReference>
<dbReference type="GO" id="GO:0032259">
    <property type="term" value="P:methylation"/>
    <property type="evidence" value="ECO:0007669"/>
    <property type="project" value="UniProtKB-KW"/>
</dbReference>
<dbReference type="CDD" id="cd02440">
    <property type="entry name" value="AdoMet_MTases"/>
    <property type="match status" value="1"/>
</dbReference>
<dbReference type="FunFam" id="3.40.50.150:FF:000014">
    <property type="entry name" value="Ubiquinone/menaquinone biosynthesis C-methyltransferase UbiE"/>
    <property type="match status" value="1"/>
</dbReference>
<dbReference type="Gene3D" id="3.40.50.150">
    <property type="entry name" value="Vaccinia Virus protein VP39"/>
    <property type="match status" value="1"/>
</dbReference>
<dbReference type="HAMAP" id="MF_01813">
    <property type="entry name" value="MenG_UbiE_methyltr"/>
    <property type="match status" value="1"/>
</dbReference>
<dbReference type="InterPro" id="IPR029063">
    <property type="entry name" value="SAM-dependent_MTases_sf"/>
</dbReference>
<dbReference type="InterPro" id="IPR004033">
    <property type="entry name" value="UbiE/COQ5_MeTrFase"/>
</dbReference>
<dbReference type="InterPro" id="IPR023576">
    <property type="entry name" value="UbiE/COQ5_MeTrFase_CS"/>
</dbReference>
<dbReference type="NCBIfam" id="TIGR01934">
    <property type="entry name" value="MenG_MenH_UbiE"/>
    <property type="match status" value="1"/>
</dbReference>
<dbReference type="NCBIfam" id="NF001240">
    <property type="entry name" value="PRK00216.1-1"/>
    <property type="match status" value="1"/>
</dbReference>
<dbReference type="NCBIfam" id="NF001242">
    <property type="entry name" value="PRK00216.1-3"/>
    <property type="match status" value="1"/>
</dbReference>
<dbReference type="NCBIfam" id="NF001244">
    <property type="entry name" value="PRK00216.1-5"/>
    <property type="match status" value="1"/>
</dbReference>
<dbReference type="PANTHER" id="PTHR43591:SF24">
    <property type="entry name" value="2-METHOXY-6-POLYPRENYL-1,4-BENZOQUINOL METHYLASE, MITOCHONDRIAL"/>
    <property type="match status" value="1"/>
</dbReference>
<dbReference type="PANTHER" id="PTHR43591">
    <property type="entry name" value="METHYLTRANSFERASE"/>
    <property type="match status" value="1"/>
</dbReference>
<dbReference type="Pfam" id="PF01209">
    <property type="entry name" value="Ubie_methyltran"/>
    <property type="match status" value="1"/>
</dbReference>
<dbReference type="SUPFAM" id="SSF53335">
    <property type="entry name" value="S-adenosyl-L-methionine-dependent methyltransferases"/>
    <property type="match status" value="1"/>
</dbReference>
<dbReference type="PROSITE" id="PS51608">
    <property type="entry name" value="SAM_MT_UBIE"/>
    <property type="match status" value="1"/>
</dbReference>
<dbReference type="PROSITE" id="PS01183">
    <property type="entry name" value="UBIE_1"/>
    <property type="match status" value="1"/>
</dbReference>
<dbReference type="PROSITE" id="PS01184">
    <property type="entry name" value="UBIE_2"/>
    <property type="match status" value="1"/>
</dbReference>
<keyword id="KW-0474">Menaquinone biosynthesis</keyword>
<keyword id="KW-0489">Methyltransferase</keyword>
<keyword id="KW-0949">S-adenosyl-L-methionine</keyword>
<keyword id="KW-0808">Transferase</keyword>
<keyword id="KW-0831">Ubiquinone biosynthesis</keyword>
<name>UBIE_SALHS</name>
<proteinExistence type="inferred from homology"/>
<gene>
    <name evidence="1" type="primary">ubiE</name>
    <name type="ordered locus">SeHA_C4297</name>
</gene>
<comment type="function">
    <text evidence="1">Methyltransferase required for the conversion of demethylmenaquinol (DMKH2) to menaquinol (MKH2) and the conversion of 2-polyprenyl-6-methoxy-1,4-benzoquinol (DDMQH2) to 2-polyprenyl-3-methyl-6-methoxy-1,4-benzoquinol (DMQH2).</text>
</comment>
<comment type="catalytic activity">
    <reaction evidence="1">
        <text>a 2-demethylmenaquinol + S-adenosyl-L-methionine = a menaquinol + S-adenosyl-L-homocysteine + H(+)</text>
        <dbReference type="Rhea" id="RHEA:42640"/>
        <dbReference type="Rhea" id="RHEA-COMP:9539"/>
        <dbReference type="Rhea" id="RHEA-COMP:9563"/>
        <dbReference type="ChEBI" id="CHEBI:15378"/>
        <dbReference type="ChEBI" id="CHEBI:18151"/>
        <dbReference type="ChEBI" id="CHEBI:55437"/>
        <dbReference type="ChEBI" id="CHEBI:57856"/>
        <dbReference type="ChEBI" id="CHEBI:59789"/>
        <dbReference type="EC" id="2.1.1.163"/>
    </reaction>
</comment>
<comment type="catalytic activity">
    <reaction evidence="1">
        <text>a 2-methoxy-6-(all-trans-polyprenyl)benzene-1,4-diol + S-adenosyl-L-methionine = a 5-methoxy-2-methyl-3-(all-trans-polyprenyl)benzene-1,4-diol + S-adenosyl-L-homocysteine + H(+)</text>
        <dbReference type="Rhea" id="RHEA:28286"/>
        <dbReference type="Rhea" id="RHEA-COMP:10858"/>
        <dbReference type="Rhea" id="RHEA-COMP:10859"/>
        <dbReference type="ChEBI" id="CHEBI:15378"/>
        <dbReference type="ChEBI" id="CHEBI:57856"/>
        <dbReference type="ChEBI" id="CHEBI:59789"/>
        <dbReference type="ChEBI" id="CHEBI:84166"/>
        <dbReference type="ChEBI" id="CHEBI:84167"/>
        <dbReference type="EC" id="2.1.1.201"/>
    </reaction>
</comment>
<comment type="pathway">
    <text evidence="1">Quinol/quinone metabolism; menaquinone biosynthesis; menaquinol from 1,4-dihydroxy-2-naphthoate: step 2/2.</text>
</comment>
<comment type="pathway">
    <text evidence="1">Cofactor biosynthesis; ubiquinone biosynthesis.</text>
</comment>
<comment type="similarity">
    <text evidence="1">Belongs to the class I-like SAM-binding methyltransferase superfamily. MenG/UbiE family.</text>
</comment>
<organism>
    <name type="scientific">Salmonella heidelberg (strain SL476)</name>
    <dbReference type="NCBI Taxonomy" id="454169"/>
    <lineage>
        <taxon>Bacteria</taxon>
        <taxon>Pseudomonadati</taxon>
        <taxon>Pseudomonadota</taxon>
        <taxon>Gammaproteobacteria</taxon>
        <taxon>Enterobacterales</taxon>
        <taxon>Enterobacteriaceae</taxon>
        <taxon>Salmonella</taxon>
    </lineage>
</organism>
<accession>B4TBR3</accession>
<feature type="chain" id="PRO_1000187806" description="Ubiquinone/menaquinone biosynthesis C-methyltransferase UbiE">
    <location>
        <begin position="1"/>
        <end position="251"/>
    </location>
</feature>
<feature type="binding site" evidence="1">
    <location>
        <position position="74"/>
    </location>
    <ligand>
        <name>S-adenosyl-L-methionine</name>
        <dbReference type="ChEBI" id="CHEBI:59789"/>
    </ligand>
</feature>
<feature type="binding site" evidence="1">
    <location>
        <position position="95"/>
    </location>
    <ligand>
        <name>S-adenosyl-L-methionine</name>
        <dbReference type="ChEBI" id="CHEBI:59789"/>
    </ligand>
</feature>
<feature type="binding site" evidence="1">
    <location>
        <begin position="123"/>
        <end position="124"/>
    </location>
    <ligand>
        <name>S-adenosyl-L-methionine</name>
        <dbReference type="ChEBI" id="CHEBI:59789"/>
    </ligand>
</feature>
<feature type="binding site" evidence="1">
    <location>
        <position position="140"/>
    </location>
    <ligand>
        <name>S-adenosyl-L-methionine</name>
        <dbReference type="ChEBI" id="CHEBI:59789"/>
    </ligand>
</feature>
<sequence length="251" mass="28136">MVEDSQETTHFGFQTVAKEQKADMVAHVFHSVASKYDVMNDLMSFGIHRLWKRFTIDCSGVRRGQTVLDLAGGTGDLTAKFSRMVGETGKVILADINDSMLKMGREKLRNIGVIGNVEYVQANAEALPFPDNTFDCITISFGLRNVTEKEKALRSMFRVLKPGGRLLVLEFSKPIIEPLSKAYDAYSFHILPRIGSMVANDADSYRYLAESIRMHPDQDTLKAMMQDAGFESVDYYNLTAGVVALHRGYKF</sequence>
<protein>
    <recommendedName>
        <fullName evidence="1">Ubiquinone/menaquinone biosynthesis C-methyltransferase UbiE</fullName>
        <ecNumber evidence="1">2.1.1.163</ecNumber>
        <ecNumber evidence="1">2.1.1.201</ecNumber>
    </recommendedName>
    <alternativeName>
        <fullName evidence="1">2-methoxy-6-polyprenyl-1,4-benzoquinol methylase</fullName>
    </alternativeName>
    <alternativeName>
        <fullName evidence="1">Demethylmenaquinone methyltransferase</fullName>
    </alternativeName>
</protein>
<evidence type="ECO:0000255" key="1">
    <source>
        <dbReference type="HAMAP-Rule" id="MF_01813"/>
    </source>
</evidence>